<feature type="chain" id="PRO_0000342362" description="Rho guanine nucleotide exchange factor 10-like protein">
    <location>
        <begin position="1"/>
        <end position="1280"/>
    </location>
</feature>
<feature type="domain" description="DH" evidence="3">
    <location>
        <begin position="314"/>
        <end position="501"/>
    </location>
</feature>
<feature type="region of interest" description="Disordered" evidence="4">
    <location>
        <begin position="1"/>
        <end position="94"/>
    </location>
</feature>
<feature type="region of interest" description="Disordered" evidence="4">
    <location>
        <begin position="161"/>
        <end position="202"/>
    </location>
</feature>
<feature type="region of interest" description="Disordered" evidence="4">
    <location>
        <begin position="1133"/>
        <end position="1163"/>
    </location>
</feature>
<feature type="region of interest" description="Disordered" evidence="4">
    <location>
        <begin position="1186"/>
        <end position="1207"/>
    </location>
</feature>
<feature type="compositionally biased region" description="Pro residues" evidence="4">
    <location>
        <begin position="1"/>
        <end position="10"/>
    </location>
</feature>
<feature type="compositionally biased region" description="Acidic residues" evidence="4">
    <location>
        <begin position="26"/>
        <end position="46"/>
    </location>
</feature>
<feature type="compositionally biased region" description="Low complexity" evidence="4">
    <location>
        <begin position="78"/>
        <end position="89"/>
    </location>
</feature>
<feature type="compositionally biased region" description="Basic and acidic residues" evidence="4">
    <location>
        <begin position="183"/>
        <end position="193"/>
    </location>
</feature>
<feature type="modified residue" description="Phosphoserine" evidence="2">
    <location>
        <position position="40"/>
    </location>
</feature>
<feature type="modified residue" description="Phosphotyrosine" evidence="9">
    <location>
        <position position="131"/>
    </location>
</feature>
<feature type="modified residue" description="Phosphotyrosine" evidence="9">
    <location>
        <position position="152"/>
    </location>
</feature>
<feature type="modified residue" description="Phosphoserine" evidence="2">
    <location>
        <position position="279"/>
    </location>
</feature>
<feature type="splice variant" id="VSP_034427" description="In isoform 5." evidence="8">
    <location>
        <begin position="1"/>
        <end position="215"/>
    </location>
</feature>
<feature type="splice variant" id="VSP_034428" description="In isoform 2 and isoform 3." evidence="5 7">
    <location>
        <begin position="201"/>
        <end position="239"/>
    </location>
</feature>
<feature type="splice variant" id="VSP_034429" description="In isoform 5." evidence="8">
    <original>TKRDILALRVGGRDMQELKLKCDCKMTQLMKAAKSGTRDGLEKTRMAVMRKVSFLHRKDVL</original>
    <variation>MLPSSSWGKRKPRSQRLGWVRCDARGNMWARQEGLRQPHPHPHALIRCPSSSSSSVSCS</variation>
    <location>
        <begin position="216"/>
        <end position="276"/>
    </location>
</feature>
<feature type="splice variant" id="VSP_034430" description="In isoform 5." evidence="8">
    <location>
        <begin position="399"/>
        <end position="468"/>
    </location>
</feature>
<feature type="splice variant" id="VSP_034431" description="In isoform 3, isoform 4 and isoform 5." evidence="5 6">
    <location>
        <begin position="576"/>
        <end position="580"/>
    </location>
</feature>
<feature type="sequence conflict" description="In Ref. 4; AAH59220." evidence="8" ref="4">
    <location>
        <begin position="280"/>
        <end position="281"/>
    </location>
</feature>
<feature type="sequence conflict" description="In Ref. 2; BAC26047." evidence="8" ref="2">
    <original>M</original>
    <variation>V</variation>
    <location>
        <position position="453"/>
    </location>
</feature>
<feature type="sequence conflict" description="In Ref. 1; BAC98218." evidence="8" ref="1">
    <original>V</original>
    <variation>I</variation>
    <location>
        <position position="850"/>
    </location>
</feature>
<sequence>MASSNPPPQPAIGAPLAPSAPGPSPEVEEDSGEAFEFDDSDEEEDTSSGLVVPGLAPERDTEPSLICFDTVPGSDLDPAAAPPQTEAPTVVSNGDAVGAAISGVRRSSWKRKSSRRIDRFTFPALEEDVIYDDVPCESPDAHQPGAERGLVYEDVHRAGAPRETEDLGWSSSEFESYSEDSGEETKPEAEPTKHRGSFQPKLSPDLTRLKERYVRTKRDILALRVGGRDMQELKLKCDCKMTQLMKAAKSGTRDGLEKTRMAVMRKVSFLHRKDVLGDSEEEDMGLLEVGVTDIKPPAPELGPMPDGLSPQQVVRRHILGSIVQSEGSYVESLKRILQDYRNPLMEMEPKALSARKCQVVFFRVKEILHCHSMFQIALSSRVAEWDSTEKIGDLFVASFSKSMVLDVYSDYVNNFTNAMSIIKKACLTKPAFLEFLKRRQVCSTDRVTLYGLMVKPVQRFPQFILLLQDMLKNTPRGHPDRLSLQLALTELETLAEKLNEQKRLADQVAEIQQLTKSVSDRSSLNKLLTSGQRQLLLCETLTETVYGDRGQLIKSKERRVFLLNDMLVCANINFKPSNHRGQLEISSLVPLGPKYVVKWNTALPQVQVVEVGQDGGTYDKDNLLIQHAGAKKATAAGQAQNKVYLGPPRLFQELQDLQKDLAVVEQITLLISTLHGTYQNLNMTVAQDWCLALQRLMRVKEEEIHSANKCRLRLLLPGKPDKSGRPISFMVVFITPNPLSKISWVNRLHLAKIGLREENQPGWLCPDEDKKSKAPFWCPILACCVPAFSSRTLSLQLGGLVHSPVNSPLLGFSAVSTSLPQGYLWVGGGQEGAGGQVEIFSLNRPSPRTVKSFPVAAPVLCIEYIPDPEEEAEGAEESRAATDPSVTVHPTVCLGLQDGSILLYGSVDTGTQCLATCKSPGPQPVLCLRHSPFYLLAGLQDGTLAAYPRTSGDIPWDLESPPMCITVGPGPIRTLLSLEDAAWASCGPRVTVLDAATLQTQQSFEAHQDEAVSVTHMVKAGSGVWMAFSSGSSIRLFHTETLEHLQEINIATRTTFLLPGQKHLCVTSLLICQGLLWVGTDQGVIVLLPVPRLEGIPKITGKGMVSLNGHCGPVAFLAVAMSILAPDILRSDQEEAEGPQAEEDKPDGQAHETVPGPDSHTARELTRKKGILLQYRLRSTAHLPGPLLSVREPAPADGSALEHSEEDGSIYEMADDPDVWVRSRPCARDAHRKEICSVAIISGGQGYRHFGGAPGGLSGRAAPCSETDSTLLIWQVPLAL</sequence>
<organism>
    <name type="scientific">Mus musculus</name>
    <name type="common">Mouse</name>
    <dbReference type="NCBI Taxonomy" id="10090"/>
    <lineage>
        <taxon>Eukaryota</taxon>
        <taxon>Metazoa</taxon>
        <taxon>Chordata</taxon>
        <taxon>Craniata</taxon>
        <taxon>Vertebrata</taxon>
        <taxon>Euteleostomi</taxon>
        <taxon>Mammalia</taxon>
        <taxon>Eutheria</taxon>
        <taxon>Euarchontoglires</taxon>
        <taxon>Glires</taxon>
        <taxon>Rodentia</taxon>
        <taxon>Myomorpha</taxon>
        <taxon>Muroidea</taxon>
        <taxon>Muridae</taxon>
        <taxon>Murinae</taxon>
        <taxon>Mus</taxon>
        <taxon>Mus</taxon>
    </lineage>
</organism>
<gene>
    <name type="primary">Arhgef10l</name>
    <name type="synonym">Kiaa1626</name>
</gene>
<keyword id="KW-0025">Alternative splicing</keyword>
<keyword id="KW-0963">Cytoplasm</keyword>
<keyword id="KW-0344">Guanine-nucleotide releasing factor</keyword>
<keyword id="KW-0597">Phosphoprotein</keyword>
<keyword id="KW-1185">Reference proteome</keyword>
<reference key="1">
    <citation type="journal article" date="2003" name="DNA Res.">
        <title>Prediction of the coding sequences of mouse homologues of KIAA gene: III. The complete nucleotide sequences of 500 mouse KIAA-homologous cDNAs identified by screening of terminal sequences of cDNA clones randomly sampled from size-fractionated libraries.</title>
        <authorList>
            <person name="Okazaki N."/>
            <person name="Kikuno R."/>
            <person name="Ohara R."/>
            <person name="Inamoto S."/>
            <person name="Koseki H."/>
            <person name="Hiraoka S."/>
            <person name="Saga Y."/>
            <person name="Nagase T."/>
            <person name="Ohara O."/>
            <person name="Koga H."/>
        </authorList>
    </citation>
    <scope>NUCLEOTIDE SEQUENCE [LARGE SCALE MRNA] (ISOFORM 3)</scope>
    <source>
        <tissue>Embryonic tail</tissue>
    </source>
</reference>
<reference key="2">
    <citation type="journal article" date="2005" name="Science">
        <title>The transcriptional landscape of the mammalian genome.</title>
        <authorList>
            <person name="Carninci P."/>
            <person name="Kasukawa T."/>
            <person name="Katayama S."/>
            <person name="Gough J."/>
            <person name="Frith M.C."/>
            <person name="Maeda N."/>
            <person name="Oyama R."/>
            <person name="Ravasi T."/>
            <person name="Lenhard B."/>
            <person name="Wells C."/>
            <person name="Kodzius R."/>
            <person name="Shimokawa K."/>
            <person name="Bajic V.B."/>
            <person name="Brenner S.E."/>
            <person name="Batalov S."/>
            <person name="Forrest A.R."/>
            <person name="Zavolan M."/>
            <person name="Davis M.J."/>
            <person name="Wilming L.G."/>
            <person name="Aidinis V."/>
            <person name="Allen J.E."/>
            <person name="Ambesi-Impiombato A."/>
            <person name="Apweiler R."/>
            <person name="Aturaliya R.N."/>
            <person name="Bailey T.L."/>
            <person name="Bansal M."/>
            <person name="Baxter L."/>
            <person name="Beisel K.W."/>
            <person name="Bersano T."/>
            <person name="Bono H."/>
            <person name="Chalk A.M."/>
            <person name="Chiu K.P."/>
            <person name="Choudhary V."/>
            <person name="Christoffels A."/>
            <person name="Clutterbuck D.R."/>
            <person name="Crowe M.L."/>
            <person name="Dalla E."/>
            <person name="Dalrymple B.P."/>
            <person name="de Bono B."/>
            <person name="Della Gatta G."/>
            <person name="di Bernardo D."/>
            <person name="Down T."/>
            <person name="Engstrom P."/>
            <person name="Fagiolini M."/>
            <person name="Faulkner G."/>
            <person name="Fletcher C.F."/>
            <person name="Fukushima T."/>
            <person name="Furuno M."/>
            <person name="Futaki S."/>
            <person name="Gariboldi M."/>
            <person name="Georgii-Hemming P."/>
            <person name="Gingeras T.R."/>
            <person name="Gojobori T."/>
            <person name="Green R.E."/>
            <person name="Gustincich S."/>
            <person name="Harbers M."/>
            <person name="Hayashi Y."/>
            <person name="Hensch T.K."/>
            <person name="Hirokawa N."/>
            <person name="Hill D."/>
            <person name="Huminiecki L."/>
            <person name="Iacono M."/>
            <person name="Ikeo K."/>
            <person name="Iwama A."/>
            <person name="Ishikawa T."/>
            <person name="Jakt M."/>
            <person name="Kanapin A."/>
            <person name="Katoh M."/>
            <person name="Kawasawa Y."/>
            <person name="Kelso J."/>
            <person name="Kitamura H."/>
            <person name="Kitano H."/>
            <person name="Kollias G."/>
            <person name="Krishnan S.P."/>
            <person name="Kruger A."/>
            <person name="Kummerfeld S.K."/>
            <person name="Kurochkin I.V."/>
            <person name="Lareau L.F."/>
            <person name="Lazarevic D."/>
            <person name="Lipovich L."/>
            <person name="Liu J."/>
            <person name="Liuni S."/>
            <person name="McWilliam S."/>
            <person name="Madan Babu M."/>
            <person name="Madera M."/>
            <person name="Marchionni L."/>
            <person name="Matsuda H."/>
            <person name="Matsuzawa S."/>
            <person name="Miki H."/>
            <person name="Mignone F."/>
            <person name="Miyake S."/>
            <person name="Morris K."/>
            <person name="Mottagui-Tabar S."/>
            <person name="Mulder N."/>
            <person name="Nakano N."/>
            <person name="Nakauchi H."/>
            <person name="Ng P."/>
            <person name="Nilsson R."/>
            <person name="Nishiguchi S."/>
            <person name="Nishikawa S."/>
            <person name="Nori F."/>
            <person name="Ohara O."/>
            <person name="Okazaki Y."/>
            <person name="Orlando V."/>
            <person name="Pang K.C."/>
            <person name="Pavan W.J."/>
            <person name="Pavesi G."/>
            <person name="Pesole G."/>
            <person name="Petrovsky N."/>
            <person name="Piazza S."/>
            <person name="Reed J."/>
            <person name="Reid J.F."/>
            <person name="Ring B.Z."/>
            <person name="Ringwald M."/>
            <person name="Rost B."/>
            <person name="Ruan Y."/>
            <person name="Salzberg S.L."/>
            <person name="Sandelin A."/>
            <person name="Schneider C."/>
            <person name="Schoenbach C."/>
            <person name="Sekiguchi K."/>
            <person name="Semple C.A."/>
            <person name="Seno S."/>
            <person name="Sessa L."/>
            <person name="Sheng Y."/>
            <person name="Shibata Y."/>
            <person name="Shimada H."/>
            <person name="Shimada K."/>
            <person name="Silva D."/>
            <person name="Sinclair B."/>
            <person name="Sperling S."/>
            <person name="Stupka E."/>
            <person name="Sugiura K."/>
            <person name="Sultana R."/>
            <person name="Takenaka Y."/>
            <person name="Taki K."/>
            <person name="Tammoja K."/>
            <person name="Tan S.L."/>
            <person name="Tang S."/>
            <person name="Taylor M.S."/>
            <person name="Tegner J."/>
            <person name="Teichmann S.A."/>
            <person name="Ueda H.R."/>
            <person name="van Nimwegen E."/>
            <person name="Verardo R."/>
            <person name="Wei C.L."/>
            <person name="Yagi K."/>
            <person name="Yamanishi H."/>
            <person name="Zabarovsky E."/>
            <person name="Zhu S."/>
            <person name="Zimmer A."/>
            <person name="Hide W."/>
            <person name="Bult C."/>
            <person name="Grimmond S.M."/>
            <person name="Teasdale R.D."/>
            <person name="Liu E.T."/>
            <person name="Brusic V."/>
            <person name="Quackenbush J."/>
            <person name="Wahlestedt C."/>
            <person name="Mattick J.S."/>
            <person name="Hume D.A."/>
            <person name="Kai C."/>
            <person name="Sasaki D."/>
            <person name="Tomaru Y."/>
            <person name="Fukuda S."/>
            <person name="Kanamori-Katayama M."/>
            <person name="Suzuki M."/>
            <person name="Aoki J."/>
            <person name="Arakawa T."/>
            <person name="Iida J."/>
            <person name="Imamura K."/>
            <person name="Itoh M."/>
            <person name="Kato T."/>
            <person name="Kawaji H."/>
            <person name="Kawagashira N."/>
            <person name="Kawashima T."/>
            <person name="Kojima M."/>
            <person name="Kondo S."/>
            <person name="Konno H."/>
            <person name="Nakano K."/>
            <person name="Ninomiya N."/>
            <person name="Nishio T."/>
            <person name="Okada M."/>
            <person name="Plessy C."/>
            <person name="Shibata K."/>
            <person name="Shiraki T."/>
            <person name="Suzuki S."/>
            <person name="Tagami M."/>
            <person name="Waki K."/>
            <person name="Watahiki A."/>
            <person name="Okamura-Oho Y."/>
            <person name="Suzuki H."/>
            <person name="Kawai J."/>
            <person name="Hayashizaki Y."/>
        </authorList>
    </citation>
    <scope>NUCLEOTIDE SEQUENCE [LARGE SCALE MRNA] (ISOFORM 2)</scope>
    <source>
        <strain>C57BL/6J</strain>
        <tissue>Skin</tissue>
    </source>
</reference>
<reference key="3">
    <citation type="journal article" date="2009" name="PLoS Biol.">
        <title>Lineage-specific biology revealed by a finished genome assembly of the mouse.</title>
        <authorList>
            <person name="Church D.M."/>
            <person name="Goodstadt L."/>
            <person name="Hillier L.W."/>
            <person name="Zody M.C."/>
            <person name="Goldstein S."/>
            <person name="She X."/>
            <person name="Bult C.J."/>
            <person name="Agarwala R."/>
            <person name="Cherry J.L."/>
            <person name="DiCuccio M."/>
            <person name="Hlavina W."/>
            <person name="Kapustin Y."/>
            <person name="Meric P."/>
            <person name="Maglott D."/>
            <person name="Birtle Z."/>
            <person name="Marques A.C."/>
            <person name="Graves T."/>
            <person name="Zhou S."/>
            <person name="Teague B."/>
            <person name="Potamousis K."/>
            <person name="Churas C."/>
            <person name="Place M."/>
            <person name="Herschleb J."/>
            <person name="Runnheim R."/>
            <person name="Forrest D."/>
            <person name="Amos-Landgraf J."/>
            <person name="Schwartz D.C."/>
            <person name="Cheng Z."/>
            <person name="Lindblad-Toh K."/>
            <person name="Eichler E.E."/>
            <person name="Ponting C.P."/>
        </authorList>
    </citation>
    <scope>NUCLEOTIDE SEQUENCE [LARGE SCALE GENOMIC DNA]</scope>
    <scope>ALTERNATIVE SPLICING</scope>
    <source>
        <strain>C57BL/6J</strain>
    </source>
</reference>
<reference key="4">
    <citation type="journal article" date="2004" name="Genome Res.">
        <title>The status, quality, and expansion of the NIH full-length cDNA project: the Mammalian Gene Collection (MGC).</title>
        <authorList>
            <consortium name="The MGC Project Team"/>
        </authorList>
    </citation>
    <scope>NUCLEOTIDE SEQUENCE [LARGE SCALE MRNA] (ISOFORM 4)</scope>
    <scope>NUCLEOTIDE SEQUENCE [LARGE SCALE MRNA] OF 561-1280 (ISOFORM 1)</scope>
    <source>
        <strain>C57BL/6J</strain>
        <strain>Czech II</strain>
        <tissue>Brain</tissue>
        <tissue>Mammary tumor</tissue>
    </source>
</reference>
<reference key="5">
    <citation type="journal article" date="2007" name="J. Immunol.">
        <title>Quantitative time-resolved phosphoproteomic analysis of mast cell signaling.</title>
        <authorList>
            <person name="Cao L."/>
            <person name="Yu K."/>
            <person name="Banh C."/>
            <person name="Nguyen V."/>
            <person name="Ritz A."/>
            <person name="Raphael B.J."/>
            <person name="Kawakami Y."/>
            <person name="Kawakami T."/>
            <person name="Salomon A.R."/>
        </authorList>
    </citation>
    <scope>PHOSPHORYLATION [LARGE SCALE ANALYSIS] AT TYR-131 AND TYR-152</scope>
    <scope>IDENTIFICATION BY MASS SPECTROMETRY [LARGE SCALE ANALYSIS]</scope>
    <source>
        <tissue>Mast cell</tissue>
    </source>
</reference>
<reference key="6">
    <citation type="journal article" date="2010" name="Cell">
        <title>A tissue-specific atlas of mouse protein phosphorylation and expression.</title>
        <authorList>
            <person name="Huttlin E.L."/>
            <person name="Jedrychowski M.P."/>
            <person name="Elias J.E."/>
            <person name="Goswami T."/>
            <person name="Rad R."/>
            <person name="Beausoleil S.A."/>
            <person name="Villen J."/>
            <person name="Haas W."/>
            <person name="Sowa M.E."/>
            <person name="Gygi S.P."/>
        </authorList>
    </citation>
    <scope>IDENTIFICATION BY MASS SPECTROMETRY [LARGE SCALE ANALYSIS]</scope>
    <source>
        <tissue>Brain</tissue>
        <tissue>Heart</tissue>
        <tissue>Liver</tissue>
        <tissue>Pancreas</tissue>
    </source>
</reference>
<proteinExistence type="evidence at protein level"/>
<comment type="function">
    <text evidence="1">Acts as a guanine nucleotide exchange factor (GEF) for RHOA, RHOB and RHOC.</text>
</comment>
<comment type="subunit">
    <text evidence="1">Interacts with RHOA, RHOB and RHOC.</text>
</comment>
<comment type="subcellular location">
    <subcellularLocation>
        <location evidence="1">Cytoplasm</location>
    </subcellularLocation>
</comment>
<comment type="alternative products">
    <event type="alternative splicing"/>
    <isoform>
        <id>A2AWP8-1</id>
        <name>1</name>
        <sequence type="displayed"/>
    </isoform>
    <isoform>
        <id>A2AWP8-2</id>
        <name>2</name>
        <sequence type="described" ref="VSP_034428"/>
    </isoform>
    <isoform>
        <id>A2AWP8-3</id>
        <name>3</name>
        <sequence type="described" ref="VSP_034428 VSP_034431"/>
    </isoform>
    <isoform>
        <id>A2AWP8-4</id>
        <name>4</name>
        <sequence type="described" ref="VSP_034431"/>
    </isoform>
    <isoform>
        <id>A2AWP8-5</id>
        <name>5</name>
        <sequence type="described" ref="VSP_034427 VSP_034429 VSP_034430 VSP_034431"/>
    </isoform>
</comment>
<comment type="sequence caution" evidence="8">
    <conflict type="erroneous initiation">
        <sequence resource="EMBL-CDS" id="BAC98218"/>
    </conflict>
</comment>
<accession>A2AWP8</accession>
<accession>A2AWP5</accession>
<accession>A2AWP9</accession>
<accession>A2AWQ0</accession>
<accession>A2AWQ1</accession>
<accession>Q6PCQ2</accession>
<accession>Q6ZPL3</accession>
<accession>Q8C1A1</accession>
<accession>Q8VDH5</accession>
<name>ARGAL_MOUSE</name>
<dbReference type="EMBL" id="AK129408">
    <property type="protein sequence ID" value="BAC98218.1"/>
    <property type="status" value="ALT_INIT"/>
    <property type="molecule type" value="mRNA"/>
</dbReference>
<dbReference type="EMBL" id="AK028648">
    <property type="protein sequence ID" value="BAC26047.1"/>
    <property type="molecule type" value="mRNA"/>
</dbReference>
<dbReference type="EMBL" id="AL929073">
    <property type="status" value="NOT_ANNOTATED_CDS"/>
    <property type="molecule type" value="Genomic_DNA"/>
</dbReference>
<dbReference type="EMBL" id="AL954710">
    <property type="status" value="NOT_ANNOTATED_CDS"/>
    <property type="molecule type" value="Genomic_DNA"/>
</dbReference>
<dbReference type="EMBL" id="BX530090">
    <property type="status" value="NOT_ANNOTATED_CDS"/>
    <property type="molecule type" value="Genomic_DNA"/>
</dbReference>
<dbReference type="EMBL" id="BC021843">
    <property type="protein sequence ID" value="AAH21843.1"/>
    <property type="molecule type" value="mRNA"/>
</dbReference>
<dbReference type="EMBL" id="BC059220">
    <property type="protein sequence ID" value="AAH59220.1"/>
    <property type="molecule type" value="mRNA"/>
</dbReference>
<dbReference type="CCDS" id="CCDS51342.1">
    <molecule id="A2AWP8-3"/>
</dbReference>
<dbReference type="CCDS" id="CCDS51343.1">
    <molecule id="A2AWP8-2"/>
</dbReference>
<dbReference type="CCDS" id="CCDS51344.1">
    <molecule id="A2AWP8-4"/>
</dbReference>
<dbReference type="CCDS" id="CCDS71507.1">
    <molecule id="A2AWP8-1"/>
</dbReference>
<dbReference type="RefSeq" id="NP_001106193.1">
    <molecule id="A2AWP8-2"/>
    <property type="nucleotide sequence ID" value="NM_001112722.1"/>
</dbReference>
<dbReference type="RefSeq" id="NP_001106194.1">
    <molecule id="A2AWP8-3"/>
    <property type="nucleotide sequence ID" value="NM_001112723.1"/>
</dbReference>
<dbReference type="RefSeq" id="NP_001277732.1">
    <molecule id="A2AWP8-1"/>
    <property type="nucleotide sequence ID" value="NM_001290803.1"/>
</dbReference>
<dbReference type="RefSeq" id="NP_766003.3">
    <molecule id="A2AWP8-4"/>
    <property type="nucleotide sequence ID" value="NM_172415.3"/>
</dbReference>
<dbReference type="RefSeq" id="XP_006539264.1">
    <molecule id="A2AWP8-1"/>
    <property type="nucleotide sequence ID" value="XM_006539201.5"/>
</dbReference>
<dbReference type="RefSeq" id="XP_006539265.1">
    <molecule id="A2AWP8-1"/>
    <property type="nucleotide sequence ID" value="XM_006539202.1"/>
</dbReference>
<dbReference type="RefSeq" id="XP_011248639.1">
    <molecule id="A2AWP8-1"/>
    <property type="nucleotide sequence ID" value="XM_011250337.4"/>
</dbReference>
<dbReference type="RefSeq" id="XP_011248642.1">
    <property type="nucleotide sequence ID" value="XM_011250340.2"/>
</dbReference>
<dbReference type="RefSeq" id="XP_017175885.1">
    <molecule id="A2AWP8-1"/>
    <property type="nucleotide sequence ID" value="XM_017320396.3"/>
</dbReference>
<dbReference type="RefSeq" id="XP_030109680.1">
    <molecule id="A2AWP8-1"/>
    <property type="nucleotide sequence ID" value="XM_030253820.2"/>
</dbReference>
<dbReference type="RefSeq" id="XP_030109681.1">
    <molecule id="A2AWP8-4"/>
    <property type="nucleotide sequence ID" value="XM_030253821.1"/>
</dbReference>
<dbReference type="RefSeq" id="XP_030109682.1">
    <molecule id="A2AWP8-3"/>
    <property type="nucleotide sequence ID" value="XM_030253822.1"/>
</dbReference>
<dbReference type="RefSeq" id="XP_036020363.1">
    <molecule id="A2AWP8-1"/>
    <property type="nucleotide sequence ID" value="XM_036164470.1"/>
</dbReference>
<dbReference type="RefSeq" id="XP_036020364.1">
    <molecule id="A2AWP8-2"/>
    <property type="nucleotide sequence ID" value="XM_036164471.1"/>
</dbReference>
<dbReference type="SMR" id="A2AWP8"/>
<dbReference type="BioGRID" id="215550">
    <property type="interactions" value="1"/>
</dbReference>
<dbReference type="FunCoup" id="A2AWP8">
    <property type="interactions" value="590"/>
</dbReference>
<dbReference type="IntAct" id="A2AWP8">
    <property type="interactions" value="1"/>
</dbReference>
<dbReference type="STRING" id="10090.ENSMUSP00000101425"/>
<dbReference type="GlyGen" id="A2AWP8">
    <property type="glycosylation" value="1 site, 1 O-linked glycan (1 site)"/>
</dbReference>
<dbReference type="iPTMnet" id="A2AWP8"/>
<dbReference type="PhosphoSitePlus" id="A2AWP8"/>
<dbReference type="PaxDb" id="10090-ENSMUSP00000040531"/>
<dbReference type="PeptideAtlas" id="A2AWP8"/>
<dbReference type="ProteomicsDB" id="277278">
    <molecule id="A2AWP8-1"/>
</dbReference>
<dbReference type="ProteomicsDB" id="277279">
    <molecule id="A2AWP8-2"/>
</dbReference>
<dbReference type="ProteomicsDB" id="277280">
    <molecule id="A2AWP8-3"/>
</dbReference>
<dbReference type="ProteomicsDB" id="277281">
    <molecule id="A2AWP8-4"/>
</dbReference>
<dbReference type="ProteomicsDB" id="277282">
    <molecule id="A2AWP8-5"/>
</dbReference>
<dbReference type="Pumba" id="A2AWP8"/>
<dbReference type="Antibodypedia" id="29390">
    <property type="antibodies" value="43 antibodies from 13 providers"/>
</dbReference>
<dbReference type="Ensembl" id="ENSMUST00000039204.10">
    <molecule id="A2AWP8-4"/>
    <property type="protein sequence ID" value="ENSMUSP00000040531.4"/>
    <property type="gene ID" value="ENSMUSG00000040964.17"/>
</dbReference>
<dbReference type="Ensembl" id="ENSMUST00000069623.12">
    <molecule id="A2AWP8-2"/>
    <property type="protein sequence ID" value="ENSMUSP00000066249.6"/>
    <property type="gene ID" value="ENSMUSG00000040964.17"/>
</dbReference>
<dbReference type="Ensembl" id="ENSMUST00000097820.9">
    <molecule id="A2AWP8-3"/>
    <property type="protein sequence ID" value="ENSMUSP00000095431.3"/>
    <property type="gene ID" value="ENSMUSG00000040964.17"/>
</dbReference>
<dbReference type="Ensembl" id="ENSMUST00000105797.9">
    <molecule id="A2AWP8-5"/>
    <property type="protein sequence ID" value="ENSMUSP00000101423.3"/>
    <property type="gene ID" value="ENSMUSG00000040964.17"/>
</dbReference>
<dbReference type="Ensembl" id="ENSMUST00000105799.8">
    <molecule id="A2AWP8-1"/>
    <property type="protein sequence ID" value="ENSMUSP00000101425.2"/>
    <property type="gene ID" value="ENSMUSG00000040964.17"/>
</dbReference>
<dbReference type="GeneID" id="72754"/>
<dbReference type="KEGG" id="mmu:72754"/>
<dbReference type="UCSC" id="uc008vmw.2">
    <molecule id="A2AWP8-4"/>
    <property type="organism name" value="mouse"/>
</dbReference>
<dbReference type="UCSC" id="uc008vmx.2">
    <molecule id="A2AWP8-3"/>
    <property type="organism name" value="mouse"/>
</dbReference>
<dbReference type="UCSC" id="uc008vmy.2">
    <molecule id="A2AWP8-2"/>
    <property type="organism name" value="mouse"/>
</dbReference>
<dbReference type="UCSC" id="uc056zye.1">
    <molecule id="A2AWP8-1"/>
    <property type="organism name" value="mouse"/>
</dbReference>
<dbReference type="AGR" id="MGI:1920004"/>
<dbReference type="CTD" id="55160"/>
<dbReference type="MGI" id="MGI:1920004">
    <property type="gene designation" value="Arhgef10l"/>
</dbReference>
<dbReference type="VEuPathDB" id="HostDB:ENSMUSG00000040964"/>
<dbReference type="eggNOG" id="KOG3522">
    <property type="taxonomic scope" value="Eukaryota"/>
</dbReference>
<dbReference type="GeneTree" id="ENSGT00940000153798"/>
<dbReference type="InParanoid" id="A2AWP8"/>
<dbReference type="OMA" id="HKCDCKM"/>
<dbReference type="OrthoDB" id="28697at2759"/>
<dbReference type="PhylomeDB" id="A2AWP8"/>
<dbReference type="TreeFam" id="TF331430"/>
<dbReference type="Reactome" id="R-MMU-193648">
    <property type="pathway name" value="NRAGE signals death through JNK"/>
</dbReference>
<dbReference type="Reactome" id="R-MMU-416482">
    <property type="pathway name" value="G alpha (12/13) signalling events"/>
</dbReference>
<dbReference type="Reactome" id="R-MMU-8980692">
    <property type="pathway name" value="RHOA GTPase cycle"/>
</dbReference>
<dbReference type="Reactome" id="R-MMU-9013026">
    <property type="pathway name" value="RHOB GTPase cycle"/>
</dbReference>
<dbReference type="Reactome" id="R-MMU-9013106">
    <property type="pathway name" value="RHOC GTPase cycle"/>
</dbReference>
<dbReference type="BioGRID-ORCS" id="72754">
    <property type="hits" value="2 hits in 76 CRISPR screens"/>
</dbReference>
<dbReference type="ChiTaRS" id="Arhgef10l">
    <property type="organism name" value="mouse"/>
</dbReference>
<dbReference type="PRO" id="PR:A2AWP8"/>
<dbReference type="Proteomes" id="UP000000589">
    <property type="component" value="Chromosome 4"/>
</dbReference>
<dbReference type="RNAct" id="A2AWP8">
    <property type="molecule type" value="protein"/>
</dbReference>
<dbReference type="Bgee" id="ENSMUSG00000040964">
    <property type="expression patterns" value="Expressed in right kidney and 128 other cell types or tissues"/>
</dbReference>
<dbReference type="ExpressionAtlas" id="A2AWP8">
    <property type="expression patterns" value="baseline and differential"/>
</dbReference>
<dbReference type="GO" id="GO:0005829">
    <property type="term" value="C:cytosol"/>
    <property type="evidence" value="ECO:0007669"/>
    <property type="project" value="Ensembl"/>
</dbReference>
<dbReference type="GO" id="GO:0005096">
    <property type="term" value="F:GTPase activator activity"/>
    <property type="evidence" value="ECO:0007669"/>
    <property type="project" value="Ensembl"/>
</dbReference>
<dbReference type="GO" id="GO:0005085">
    <property type="term" value="F:guanyl-nucleotide exchange factor activity"/>
    <property type="evidence" value="ECO:0007669"/>
    <property type="project" value="UniProtKB-KW"/>
</dbReference>
<dbReference type="GO" id="GO:0051496">
    <property type="term" value="P:positive regulation of stress fiber assembly"/>
    <property type="evidence" value="ECO:0007669"/>
    <property type="project" value="Ensembl"/>
</dbReference>
<dbReference type="GO" id="GO:0032933">
    <property type="term" value="P:SREBP signaling pathway"/>
    <property type="evidence" value="ECO:0007669"/>
    <property type="project" value="Ensembl"/>
</dbReference>
<dbReference type="CDD" id="cd00160">
    <property type="entry name" value="RhoGEF"/>
    <property type="match status" value="1"/>
</dbReference>
<dbReference type="FunFam" id="2.30.29.30:FF:000200">
    <property type="entry name" value="Rho guanine nucleotide exchange factor (GEF) 10-like a"/>
    <property type="match status" value="1"/>
</dbReference>
<dbReference type="FunFam" id="1.20.900.10:FF:000003">
    <property type="entry name" value="Rho guanine nucleotide exchange factor 10 like"/>
    <property type="match status" value="1"/>
</dbReference>
<dbReference type="FunFam" id="2.130.10.10:FF:000405">
    <property type="entry name" value="rho guanine nucleotide exchange factor 10-like protein isoform X1"/>
    <property type="match status" value="1"/>
</dbReference>
<dbReference type="Gene3D" id="1.20.900.10">
    <property type="entry name" value="Dbl homology (DH) domain"/>
    <property type="match status" value="1"/>
</dbReference>
<dbReference type="Gene3D" id="2.30.29.30">
    <property type="entry name" value="Pleckstrin-homology domain (PH domain)/Phosphotyrosine-binding domain (PTB)"/>
    <property type="match status" value="1"/>
</dbReference>
<dbReference type="Gene3D" id="2.130.10.10">
    <property type="entry name" value="YVTN repeat-like/Quinoprotein amine dehydrogenase"/>
    <property type="match status" value="1"/>
</dbReference>
<dbReference type="InterPro" id="IPR039919">
    <property type="entry name" value="ARHGEF10/ARHGEF17"/>
</dbReference>
<dbReference type="InterPro" id="IPR035899">
    <property type="entry name" value="DBL_dom_sf"/>
</dbReference>
<dbReference type="InterPro" id="IPR000219">
    <property type="entry name" value="DH_dom"/>
</dbReference>
<dbReference type="InterPro" id="IPR011993">
    <property type="entry name" value="PH-like_dom_sf"/>
</dbReference>
<dbReference type="InterPro" id="IPR015943">
    <property type="entry name" value="WD40/YVTN_repeat-like_dom_sf"/>
</dbReference>
<dbReference type="InterPro" id="IPR036322">
    <property type="entry name" value="WD40_repeat_dom_sf"/>
</dbReference>
<dbReference type="PANTHER" id="PTHR12877">
    <property type="entry name" value="RHO GUANINE NUCLEOTIDE EXCHANGE FACTOR"/>
    <property type="match status" value="1"/>
</dbReference>
<dbReference type="PANTHER" id="PTHR12877:SF16">
    <property type="entry name" value="RHO GUANINE NUCLEOTIDE EXCHANGE FACTOR 10-LIKE PROTEIN"/>
    <property type="match status" value="1"/>
</dbReference>
<dbReference type="Pfam" id="PF19057">
    <property type="entry name" value="PH_19"/>
    <property type="match status" value="1"/>
</dbReference>
<dbReference type="Pfam" id="PF00621">
    <property type="entry name" value="RhoGEF"/>
    <property type="match status" value="1"/>
</dbReference>
<dbReference type="Pfam" id="PF19056">
    <property type="entry name" value="WD40_2"/>
    <property type="match status" value="1"/>
</dbReference>
<dbReference type="SMART" id="SM00325">
    <property type="entry name" value="RhoGEF"/>
    <property type="match status" value="1"/>
</dbReference>
<dbReference type="SUPFAM" id="SSF48065">
    <property type="entry name" value="DBL homology domain (DH-domain)"/>
    <property type="match status" value="1"/>
</dbReference>
<dbReference type="SUPFAM" id="SSF50729">
    <property type="entry name" value="PH domain-like"/>
    <property type="match status" value="1"/>
</dbReference>
<dbReference type="SUPFAM" id="SSF50978">
    <property type="entry name" value="WD40 repeat-like"/>
    <property type="match status" value="1"/>
</dbReference>
<dbReference type="PROSITE" id="PS50010">
    <property type="entry name" value="DH_2"/>
    <property type="match status" value="1"/>
</dbReference>
<protein>
    <recommendedName>
        <fullName>Rho guanine nucleotide exchange factor 10-like protein</fullName>
    </recommendedName>
    <alternativeName>
        <fullName>GrinchGEF</fullName>
    </alternativeName>
</protein>
<evidence type="ECO:0000250" key="1"/>
<evidence type="ECO:0000250" key="2">
    <source>
        <dbReference type="UniProtKB" id="Q9HCE6"/>
    </source>
</evidence>
<evidence type="ECO:0000255" key="3">
    <source>
        <dbReference type="PROSITE-ProRule" id="PRU00062"/>
    </source>
</evidence>
<evidence type="ECO:0000256" key="4">
    <source>
        <dbReference type="SAM" id="MobiDB-lite"/>
    </source>
</evidence>
<evidence type="ECO:0000303" key="5">
    <source>
    </source>
</evidence>
<evidence type="ECO:0000303" key="6">
    <source>
    </source>
</evidence>
<evidence type="ECO:0000303" key="7">
    <source>
    </source>
</evidence>
<evidence type="ECO:0000305" key="8"/>
<evidence type="ECO:0007744" key="9">
    <source>
    </source>
</evidence>